<reference evidence="5" key="1">
    <citation type="submission" date="2008-11" db="EMBL/GenBank/DDBJ databases">
        <title>L-malyl-CoA/beta-methylmalyl-CoA lyase from Rhodobacter sphaeroides.</title>
        <authorList>
            <person name="Zarzycki J."/>
            <person name="Fuchs G."/>
            <person name="Alber B.E."/>
        </authorList>
    </citation>
    <scope>NUCLEOTIDE SEQUENCE [GENOMIC DNA]</scope>
</reference>
<reference evidence="4 6" key="2">
    <citation type="journal article" date="2010" name="J. Bacteriol.">
        <title>The apparent malate synthase activity of Rhodobacter sphaeroides is due to two paralogous enzymes, (3S)-Malyl-coenzyme A (CoA)/{beta}-methylmalyl-CoA lyase and (3S)- Malyl-CoA thioesterase.</title>
        <authorList>
            <person name="Erb T.J."/>
            <person name="Frerichs-Revermann L."/>
            <person name="Fuchs G."/>
            <person name="Alber B.E."/>
        </authorList>
    </citation>
    <scope>NUCLEOTIDE SEQUENCE [GENOMIC DNA]</scope>
    <scope>FUNCTION</scope>
    <scope>CATALYTIC ACTIVITY</scope>
    <scope>COFACTOR</scope>
    <scope>ACTIVITY REGULATION</scope>
    <scope>BIOPHYSICOCHEMICAL PROPERTIES</scope>
    <scope>SUBUNIT</scope>
    <scope>INDUCTION</scope>
    <source>
        <strain>ATCC 17023 / DSM 158 / JCM 6121 / CCUG 31486 / LMG 2827 / NBRC 12203 / NCIMB 8253 / ATH 2.4.1.</strain>
    </source>
</reference>
<reference evidence="5" key="3">
    <citation type="submission" date="2005-09" db="EMBL/GenBank/DDBJ databases">
        <title>Complete sequence of chromosome 1 of Rhodobacter sphaeroides 2.4.1.</title>
        <authorList>
            <person name="Copeland A."/>
            <person name="Lucas S."/>
            <person name="Lapidus A."/>
            <person name="Barry K."/>
            <person name="Detter J.C."/>
            <person name="Glavina T."/>
            <person name="Hammon N."/>
            <person name="Israni S."/>
            <person name="Pitluck S."/>
            <person name="Richardson P."/>
            <person name="Mackenzie C."/>
            <person name="Choudhary M."/>
            <person name="Larimer F."/>
            <person name="Hauser L.J."/>
            <person name="Land M."/>
            <person name="Donohue T.J."/>
            <person name="Kaplan S."/>
        </authorList>
    </citation>
    <scope>NUCLEOTIDE SEQUENCE [LARGE SCALE GENOMIC DNA]</scope>
    <source>
        <strain>ATCC 17023 / DSM 158 / JCM 6121 / CCUG 31486 / LMG 2827 / NBRC 12203 / NCIMB 8253 / ATH 2.4.1.</strain>
    </source>
</reference>
<reference key="4">
    <citation type="journal article" date="2013" name="BMC Struct. Biol.">
        <title>The crystal structures of the tri-functional Chloroflexus aurantiacus and bi-functional Rhodobacter sphaeroides malyl-CoA lyases and comparison with CitE-like superfamily enzymes and malate synthases.</title>
        <authorList>
            <person name="Zarzycki J."/>
            <person name="Kerfeld C.A."/>
        </authorList>
    </citation>
    <scope>X-RAY CRYSTALLOGRAPHY (2.1 ANGSTROMS) IN COMPLEX WITH SUBSTRATE ANALOGS AND MAGNESIUM ION</scope>
    <scope>FUNCTION</scope>
    <scope>CATALYTIC ACTIVITY</scope>
    <scope>COFACTOR</scope>
    <scope>SUBUNIT</scope>
</reference>
<protein>
    <recommendedName>
        <fullName evidence="5">L-malyl-CoA/beta-methylmalyl-CoA lyase</fullName>
        <ecNumber evidence="2">4.1.3.24</ecNumber>
    </recommendedName>
    <alternativeName>
        <fullName evidence="6">(3S)-malyl-CoA/beta-methylmalyl-CoA lyase</fullName>
    </alternativeName>
    <alternativeName>
        <fullName>(S)-citramalyl-CoA lyase</fullName>
        <ecNumber evidence="3">4.1.3.25</ecNumber>
    </alternativeName>
</protein>
<comment type="function">
    <text evidence="2 3">Involved in the ethylmalonyl-CoA pathway for acetate assimilation. Catalyzes the reversible condensation of glyoxylate and acetyl-CoA to L-malyl-CoA and the reversible condensation of glyoxylate and propionyl-CoA to yield beta-methylmalyl-CoA. It is also able to catalyze the cleavage of (S)-citramalyl-CoA to yield acetyl-CoA and pyruvate, although this reaction is not involved in the ethylmalonyl-CoA pathway.</text>
</comment>
<comment type="catalytic activity">
    <reaction evidence="2">
        <text>(S)-malyl-CoA = glyoxylate + acetyl-CoA</text>
        <dbReference type="Rhea" id="RHEA:16629"/>
        <dbReference type="ChEBI" id="CHEBI:36655"/>
        <dbReference type="ChEBI" id="CHEBI:57288"/>
        <dbReference type="ChEBI" id="CHEBI:57317"/>
        <dbReference type="EC" id="4.1.3.24"/>
    </reaction>
</comment>
<comment type="catalytic activity">
    <reaction evidence="2">
        <text>(2R,3S)-beta-methylmalyl-CoA = propanoyl-CoA + glyoxylate</text>
        <dbReference type="Rhea" id="RHEA:38259"/>
        <dbReference type="ChEBI" id="CHEBI:36655"/>
        <dbReference type="ChEBI" id="CHEBI:57392"/>
        <dbReference type="ChEBI" id="CHEBI:75634"/>
        <dbReference type="EC" id="4.1.3.24"/>
    </reaction>
</comment>
<comment type="catalytic activity">
    <reaction evidence="3">
        <text>(3S)-citramalyl-CoA = pyruvate + acetyl-CoA</text>
        <dbReference type="Rhea" id="RHEA:22612"/>
        <dbReference type="ChEBI" id="CHEBI:15361"/>
        <dbReference type="ChEBI" id="CHEBI:57288"/>
        <dbReference type="ChEBI" id="CHEBI:58668"/>
        <dbReference type="EC" id="4.1.3.25"/>
    </reaction>
</comment>
<comment type="cofactor">
    <cofactor evidence="2 3">
        <name>Mg(2+)</name>
        <dbReference type="ChEBI" id="CHEBI:18420"/>
    </cofactor>
    <cofactor evidence="2 3">
        <name>Mn(2+)</name>
        <dbReference type="ChEBI" id="CHEBI:29035"/>
    </cofactor>
    <text evidence="2 3">Divalent cations such as magnesium or manganese.</text>
</comment>
<comment type="activity regulation">
    <text evidence="2">Inhibited by EDTA.</text>
</comment>
<comment type="biophysicochemical properties">
    <kinetics>
        <KM evidence="2">3.1 mM for glyoxylate (for L-malyl-CoA formation)</KM>
        <KM evidence="2">0.07 mM for acetyl-CoA (for L-malyl-CoA formation)</KM>
        <KM evidence="2">4.1 mM for glyoxylate (for beta-methylmalyl-CoA formation)</KM>
        <KM evidence="2">0.2 mM for propionyl-CoA (for beta-methylmalyl-CoA formation)</KM>
        <KM evidence="2">0.02 mM for (3S)-malyl-CoA</KM>
        <KM evidence="2">0.01 mM for beta-methylmalyl-CoA</KM>
    </kinetics>
</comment>
<comment type="subunit">
    <text evidence="2 3">Homohexamer. Dimer of trimers.</text>
</comment>
<comment type="induction">
    <text evidence="2">By growth on acetate.</text>
</comment>
<comment type="similarity">
    <text evidence="4">Belongs to the HpcH/HpaI aldolase family.</text>
</comment>
<feature type="initiator methionine" description="Removed" evidence="1">
    <location>
        <position position="1"/>
    </location>
</feature>
<feature type="chain" id="PRO_0000404701" description="L-malyl-CoA/beta-methylmalyl-CoA lyase">
    <location>
        <begin position="2"/>
        <end position="318"/>
    </location>
</feature>
<feature type="binding site" evidence="3 7">
    <location>
        <position position="19"/>
    </location>
    <ligand>
        <name>substrate</name>
    </ligand>
</feature>
<feature type="binding site" evidence="3 7">
    <location>
        <position position="24"/>
    </location>
    <ligand>
        <name>substrate</name>
    </ligand>
</feature>
<feature type="binding site" evidence="3 8">
    <location>
        <position position="30"/>
    </location>
    <ligand>
        <name>substrate</name>
    </ligand>
</feature>
<feature type="binding site" evidence="3 7 8">
    <location>
        <position position="76"/>
    </location>
    <ligand>
        <name>substrate</name>
    </ligand>
</feature>
<feature type="binding site" evidence="3 7 8">
    <location>
        <position position="141"/>
    </location>
    <ligand>
        <name>Mg(2+)</name>
        <dbReference type="ChEBI" id="CHEBI:18420"/>
    </ligand>
</feature>
<feature type="binding site" evidence="3 8">
    <location>
        <begin position="167"/>
        <end position="168"/>
    </location>
    <ligand>
        <name>substrate</name>
    </ligand>
</feature>
<feature type="binding site" evidence="3 7 8">
    <location>
        <position position="168"/>
    </location>
    <ligand>
        <name>Mg(2+)</name>
        <dbReference type="ChEBI" id="CHEBI:18420"/>
    </ligand>
</feature>
<feature type="binding site" evidence="3 8">
    <location>
        <begin position="251"/>
        <end position="252"/>
    </location>
    <ligand>
        <name>substrate</name>
    </ligand>
</feature>
<feature type="strand" evidence="10">
    <location>
        <begin position="15"/>
        <end position="21"/>
    </location>
</feature>
<feature type="helix" evidence="10">
    <location>
        <begin position="25"/>
        <end position="27"/>
    </location>
</feature>
<feature type="helix" evidence="10">
    <location>
        <begin position="28"/>
        <end position="32"/>
    </location>
</feature>
<feature type="strand" evidence="10">
    <location>
        <begin position="37"/>
        <end position="44"/>
    </location>
</feature>
<feature type="helix" evidence="10">
    <location>
        <begin position="49"/>
        <end position="51"/>
    </location>
</feature>
<feature type="helix" evidence="10">
    <location>
        <begin position="52"/>
        <end position="65"/>
    </location>
</feature>
<feature type="strand" evidence="10">
    <location>
        <begin position="72"/>
        <end position="76"/>
    </location>
</feature>
<feature type="strand" evidence="10">
    <location>
        <begin position="82"/>
        <end position="84"/>
    </location>
</feature>
<feature type="helix" evidence="10">
    <location>
        <begin position="85"/>
        <end position="95"/>
    </location>
</feature>
<feature type="strand" evidence="10">
    <location>
        <begin position="102"/>
        <end position="105"/>
    </location>
</feature>
<feature type="helix" evidence="10">
    <location>
        <begin position="111"/>
        <end position="128"/>
    </location>
</feature>
<feature type="strand" evidence="10">
    <location>
        <begin position="135"/>
        <end position="140"/>
    </location>
</feature>
<feature type="helix" evidence="10">
    <location>
        <begin position="143"/>
        <end position="147"/>
    </location>
</feature>
<feature type="helix" evidence="10">
    <location>
        <begin position="149"/>
        <end position="153"/>
    </location>
</feature>
<feature type="strand" evidence="10">
    <location>
        <begin position="159"/>
        <end position="164"/>
    </location>
</feature>
<feature type="helix" evidence="10">
    <location>
        <begin position="166"/>
        <end position="173"/>
    </location>
</feature>
<feature type="strand" evidence="9">
    <location>
        <begin position="179"/>
        <end position="182"/>
    </location>
</feature>
<feature type="strand" evidence="10">
    <location>
        <begin position="188"/>
        <end position="191"/>
    </location>
</feature>
<feature type="strand" evidence="10">
    <location>
        <begin position="194"/>
        <end position="197"/>
    </location>
</feature>
<feature type="helix" evidence="10">
    <location>
        <begin position="202"/>
        <end position="215"/>
    </location>
</feature>
<feature type="strand" evidence="10">
    <location>
        <begin position="218"/>
        <end position="221"/>
    </location>
</feature>
<feature type="helix" evidence="10">
    <location>
        <begin position="230"/>
        <end position="243"/>
    </location>
</feature>
<feature type="strand" evidence="10">
    <location>
        <begin position="248"/>
        <end position="252"/>
    </location>
</feature>
<feature type="helix" evidence="10">
    <location>
        <begin position="255"/>
        <end position="262"/>
    </location>
</feature>
<feature type="helix" evidence="10">
    <location>
        <begin position="267"/>
        <end position="285"/>
    </location>
</feature>
<feature type="strand" evidence="10">
    <location>
        <begin position="289"/>
        <end position="293"/>
    </location>
</feature>
<feature type="strand" evidence="10">
    <location>
        <begin position="296"/>
        <end position="299"/>
    </location>
</feature>
<feature type="helix" evidence="10">
    <location>
        <begin position="300"/>
        <end position="314"/>
    </location>
</feature>
<keyword id="KW-0002">3D-structure</keyword>
<keyword id="KW-0456">Lyase</keyword>
<keyword id="KW-0460">Magnesium</keyword>
<keyword id="KW-0464">Manganese</keyword>
<keyword id="KW-0479">Metal-binding</keyword>
<keyword id="KW-1185">Reference proteome</keyword>
<organism>
    <name type="scientific">Cereibacter sphaeroides (strain ATCC 17023 / DSM 158 / JCM 6121 / CCUG 31486 / LMG 2827 / NBRC 12203 / NCIMB 8253 / ATH 2.4.1.)</name>
    <name type="common">Rhodobacter sphaeroides</name>
    <dbReference type="NCBI Taxonomy" id="272943"/>
    <lineage>
        <taxon>Bacteria</taxon>
        <taxon>Pseudomonadati</taxon>
        <taxon>Pseudomonadota</taxon>
        <taxon>Alphaproteobacteria</taxon>
        <taxon>Rhodobacterales</taxon>
        <taxon>Paracoccaceae</taxon>
        <taxon>Cereibacter</taxon>
    </lineage>
</organism>
<dbReference type="EC" id="4.1.3.24" evidence="2"/>
<dbReference type="EC" id="4.1.3.25" evidence="3"/>
<dbReference type="EMBL" id="GU320612">
    <property type="protein sequence ID" value="ADC44453.1"/>
    <property type="molecule type" value="Genomic_DNA"/>
</dbReference>
<dbReference type="EMBL" id="FJ445415">
    <property type="protein sequence ID" value="ACJ71673.1"/>
    <property type="molecule type" value="Genomic_DNA"/>
</dbReference>
<dbReference type="EMBL" id="CP000143">
    <property type="protein sequence ID" value="ABA77918.1"/>
    <property type="molecule type" value="Genomic_DNA"/>
</dbReference>
<dbReference type="RefSeq" id="WP_011336971.1">
    <property type="nucleotide sequence ID" value="NZ_CP030271.1"/>
</dbReference>
<dbReference type="RefSeq" id="YP_351819.1">
    <property type="nucleotide sequence ID" value="NC_007493.2"/>
</dbReference>
<dbReference type="PDB" id="4L9Y">
    <property type="method" value="X-ray"/>
    <property type="resolution" value="2.10 A"/>
    <property type="chains" value="A/B/C/D/E/F=1-318"/>
</dbReference>
<dbReference type="PDB" id="4L9Z">
    <property type="method" value="X-ray"/>
    <property type="resolution" value="2.01 A"/>
    <property type="chains" value="A/B/C/D/E/F=1-318"/>
</dbReference>
<dbReference type="PDBsum" id="4L9Y"/>
<dbReference type="PDBsum" id="4L9Z"/>
<dbReference type="SMR" id="Q3J5L6"/>
<dbReference type="STRING" id="272943.RSP_1771"/>
<dbReference type="EnsemblBacteria" id="ABA77918">
    <property type="protein sequence ID" value="ABA77918"/>
    <property type="gene ID" value="RSP_1771"/>
</dbReference>
<dbReference type="KEGG" id="rsp:RSP_1771"/>
<dbReference type="PATRIC" id="fig|272943.9.peg.650"/>
<dbReference type="eggNOG" id="COG2301">
    <property type="taxonomic scope" value="Bacteria"/>
</dbReference>
<dbReference type="OrthoDB" id="9800547at2"/>
<dbReference type="PhylomeDB" id="Q3J5L6"/>
<dbReference type="BRENDA" id="4.1.3.24">
    <property type="organism ID" value="5383"/>
</dbReference>
<dbReference type="SABIO-RK" id="Q3J5L6"/>
<dbReference type="EvolutionaryTrace" id="Q3J5L6"/>
<dbReference type="Proteomes" id="UP000002703">
    <property type="component" value="Chromosome 1"/>
</dbReference>
<dbReference type="GO" id="GO:0047777">
    <property type="term" value="F:(S)-citramalyl-CoA lyase activity"/>
    <property type="evidence" value="ECO:0000314"/>
    <property type="project" value="UniProtKB"/>
</dbReference>
<dbReference type="GO" id="GO:0043959">
    <property type="term" value="F:L-erythro-3-methylmalyl-CoA lyase activity"/>
    <property type="evidence" value="ECO:0007669"/>
    <property type="project" value="RHEA"/>
</dbReference>
<dbReference type="GO" id="GO:0000287">
    <property type="term" value="F:magnesium ion binding"/>
    <property type="evidence" value="ECO:0007669"/>
    <property type="project" value="TreeGrafter"/>
</dbReference>
<dbReference type="GO" id="GO:0050083">
    <property type="term" value="F:malyl-CoA lyase activity"/>
    <property type="evidence" value="ECO:0000314"/>
    <property type="project" value="UniProtKB"/>
</dbReference>
<dbReference type="GO" id="GO:0046872">
    <property type="term" value="F:metal ion binding"/>
    <property type="evidence" value="ECO:0000314"/>
    <property type="project" value="UniProtKB"/>
</dbReference>
<dbReference type="GO" id="GO:0006107">
    <property type="term" value="P:oxaloacetate metabolic process"/>
    <property type="evidence" value="ECO:0007669"/>
    <property type="project" value="TreeGrafter"/>
</dbReference>
<dbReference type="FunFam" id="3.20.20.60:FF:000020">
    <property type="entry name" value="Malyl-CoA lyase"/>
    <property type="match status" value="1"/>
</dbReference>
<dbReference type="Gene3D" id="3.20.20.60">
    <property type="entry name" value="Phosphoenolpyruvate-binding domains"/>
    <property type="match status" value="1"/>
</dbReference>
<dbReference type="InterPro" id="IPR005000">
    <property type="entry name" value="Aldolase/citrate-lyase_domain"/>
</dbReference>
<dbReference type="InterPro" id="IPR011206">
    <property type="entry name" value="Citrate_lyase_beta/mcl1/mcl2"/>
</dbReference>
<dbReference type="InterPro" id="IPR015813">
    <property type="entry name" value="Pyrv/PenolPyrv_kinase-like_dom"/>
</dbReference>
<dbReference type="InterPro" id="IPR040442">
    <property type="entry name" value="Pyrv_kinase-like_dom_sf"/>
</dbReference>
<dbReference type="PANTHER" id="PTHR32308:SF10">
    <property type="entry name" value="CITRATE LYASE SUBUNIT BETA"/>
    <property type="match status" value="1"/>
</dbReference>
<dbReference type="PANTHER" id="PTHR32308">
    <property type="entry name" value="LYASE BETA SUBUNIT, PUTATIVE (AFU_ORTHOLOGUE AFUA_4G13030)-RELATED"/>
    <property type="match status" value="1"/>
</dbReference>
<dbReference type="Pfam" id="PF03328">
    <property type="entry name" value="HpcH_HpaI"/>
    <property type="match status" value="1"/>
</dbReference>
<dbReference type="PIRSF" id="PIRSF015582">
    <property type="entry name" value="Cit_lyase_B"/>
    <property type="match status" value="1"/>
</dbReference>
<dbReference type="SUPFAM" id="SSF51621">
    <property type="entry name" value="Phosphoenolpyruvate/pyruvate domain"/>
    <property type="match status" value="1"/>
</dbReference>
<proteinExistence type="evidence at protein level"/>
<evidence type="ECO:0000250" key="1">
    <source>
        <dbReference type="UniProtKB" id="B6E2X2"/>
    </source>
</evidence>
<evidence type="ECO:0000269" key="2">
    <source>
    </source>
</evidence>
<evidence type="ECO:0000269" key="3">
    <source>
    </source>
</evidence>
<evidence type="ECO:0000305" key="4"/>
<evidence type="ECO:0000312" key="5">
    <source>
        <dbReference type="EMBL" id="ACJ71673.1"/>
    </source>
</evidence>
<evidence type="ECO:0000312" key="6">
    <source>
        <dbReference type="EMBL" id="ADC44453.1"/>
    </source>
</evidence>
<evidence type="ECO:0007744" key="7">
    <source>
        <dbReference type="PDB" id="4L9Y"/>
    </source>
</evidence>
<evidence type="ECO:0007744" key="8">
    <source>
        <dbReference type="PDB" id="4L9Z"/>
    </source>
</evidence>
<evidence type="ECO:0007829" key="9">
    <source>
        <dbReference type="PDB" id="4L9Y"/>
    </source>
</evidence>
<evidence type="ECO:0007829" key="10">
    <source>
        <dbReference type="PDB" id="4L9Z"/>
    </source>
</evidence>
<gene>
    <name evidence="5" type="primary">mcl1</name>
    <name type="ordered locus">RHOS4_03500</name>
    <name type="ORF">RSP_1771</name>
</gene>
<accession>Q3J5L6</accession>
<accession>B8XVS9</accession>
<sequence>MSFRLQPAPPARPNRCQLFGPGSRPALFEKMAASAADVINLDLEDSVAPDDKAQARANIIEAINGLDWGRKYLSVRINGLDTPFWYRDVVDLLEQAGDRLDQIMIPKVGCAADVYAVDALVTAIERAKGRTKPLSFEVIIESAAGIAHVEEIAASSPRLQAMSLGAADFAASMGMQTTGIGGTQENYYMLHDGQKHWSDPWHWAQAAIVAACRTHGILPVDGPFGDFSDDEGFRAQARRSATLGMVGKWAIHPKQVALANEVFTPSETAVTEAREILAAMDAAKARGEGATVYKGRLVDIASIKQAEVIVRQAEMISA</sequence>
<name>MCAL_CERS4</name>